<reference key="1">
    <citation type="journal article" date="2004" name="Nat. Genet.">
        <title>Complete sequencing and characterization of 21,243 full-length human cDNAs.</title>
        <authorList>
            <person name="Ota T."/>
            <person name="Suzuki Y."/>
            <person name="Nishikawa T."/>
            <person name="Otsuki T."/>
            <person name="Sugiyama T."/>
            <person name="Irie R."/>
            <person name="Wakamatsu A."/>
            <person name="Hayashi K."/>
            <person name="Sato H."/>
            <person name="Nagai K."/>
            <person name="Kimura K."/>
            <person name="Makita H."/>
            <person name="Sekine M."/>
            <person name="Obayashi M."/>
            <person name="Nishi T."/>
            <person name="Shibahara T."/>
            <person name="Tanaka T."/>
            <person name="Ishii S."/>
            <person name="Yamamoto J."/>
            <person name="Saito K."/>
            <person name="Kawai Y."/>
            <person name="Isono Y."/>
            <person name="Nakamura Y."/>
            <person name="Nagahari K."/>
            <person name="Murakami K."/>
            <person name="Yasuda T."/>
            <person name="Iwayanagi T."/>
            <person name="Wagatsuma M."/>
            <person name="Shiratori A."/>
            <person name="Sudo H."/>
            <person name="Hosoiri T."/>
            <person name="Kaku Y."/>
            <person name="Kodaira H."/>
            <person name="Kondo H."/>
            <person name="Sugawara M."/>
            <person name="Takahashi M."/>
            <person name="Kanda K."/>
            <person name="Yokoi T."/>
            <person name="Furuya T."/>
            <person name="Kikkawa E."/>
            <person name="Omura Y."/>
            <person name="Abe K."/>
            <person name="Kamihara K."/>
            <person name="Katsuta N."/>
            <person name="Sato K."/>
            <person name="Tanikawa M."/>
            <person name="Yamazaki M."/>
            <person name="Ninomiya K."/>
            <person name="Ishibashi T."/>
            <person name="Yamashita H."/>
            <person name="Murakawa K."/>
            <person name="Fujimori K."/>
            <person name="Tanai H."/>
            <person name="Kimata M."/>
            <person name="Watanabe M."/>
            <person name="Hiraoka S."/>
            <person name="Chiba Y."/>
            <person name="Ishida S."/>
            <person name="Ono Y."/>
            <person name="Takiguchi S."/>
            <person name="Watanabe S."/>
            <person name="Yosida M."/>
            <person name="Hotuta T."/>
            <person name="Kusano J."/>
            <person name="Kanehori K."/>
            <person name="Takahashi-Fujii A."/>
            <person name="Hara H."/>
            <person name="Tanase T.-O."/>
            <person name="Nomura Y."/>
            <person name="Togiya S."/>
            <person name="Komai F."/>
            <person name="Hara R."/>
            <person name="Takeuchi K."/>
            <person name="Arita M."/>
            <person name="Imose N."/>
            <person name="Musashino K."/>
            <person name="Yuuki H."/>
            <person name="Oshima A."/>
            <person name="Sasaki N."/>
            <person name="Aotsuka S."/>
            <person name="Yoshikawa Y."/>
            <person name="Matsunawa H."/>
            <person name="Ichihara T."/>
            <person name="Shiohata N."/>
            <person name="Sano S."/>
            <person name="Moriya S."/>
            <person name="Momiyama H."/>
            <person name="Satoh N."/>
            <person name="Takami S."/>
            <person name="Terashima Y."/>
            <person name="Suzuki O."/>
            <person name="Nakagawa S."/>
            <person name="Senoh A."/>
            <person name="Mizoguchi H."/>
            <person name="Goto Y."/>
            <person name="Shimizu F."/>
            <person name="Wakebe H."/>
            <person name="Hishigaki H."/>
            <person name="Watanabe T."/>
            <person name="Sugiyama A."/>
            <person name="Takemoto M."/>
            <person name="Kawakami B."/>
            <person name="Yamazaki M."/>
            <person name="Watanabe K."/>
            <person name="Kumagai A."/>
            <person name="Itakura S."/>
            <person name="Fukuzumi Y."/>
            <person name="Fujimori Y."/>
            <person name="Komiyama M."/>
            <person name="Tashiro H."/>
            <person name="Tanigami A."/>
            <person name="Fujiwara T."/>
            <person name="Ono T."/>
            <person name="Yamada K."/>
            <person name="Fujii Y."/>
            <person name="Ozaki K."/>
            <person name="Hirao M."/>
            <person name="Ohmori Y."/>
            <person name="Kawabata A."/>
            <person name="Hikiji T."/>
            <person name="Kobatake N."/>
            <person name="Inagaki H."/>
            <person name="Ikema Y."/>
            <person name="Okamoto S."/>
            <person name="Okitani R."/>
            <person name="Kawakami T."/>
            <person name="Noguchi S."/>
            <person name="Itoh T."/>
            <person name="Shigeta K."/>
            <person name="Senba T."/>
            <person name="Matsumura K."/>
            <person name="Nakajima Y."/>
            <person name="Mizuno T."/>
            <person name="Morinaga M."/>
            <person name="Sasaki M."/>
            <person name="Togashi T."/>
            <person name="Oyama M."/>
            <person name="Hata H."/>
            <person name="Watanabe M."/>
            <person name="Komatsu T."/>
            <person name="Mizushima-Sugano J."/>
            <person name="Satoh T."/>
            <person name="Shirai Y."/>
            <person name="Takahashi Y."/>
            <person name="Nakagawa K."/>
            <person name="Okumura K."/>
            <person name="Nagase T."/>
            <person name="Nomura N."/>
            <person name="Kikuchi H."/>
            <person name="Masuho Y."/>
            <person name="Yamashita R."/>
            <person name="Nakai K."/>
            <person name="Yada T."/>
            <person name="Nakamura Y."/>
            <person name="Ohara O."/>
            <person name="Isogai T."/>
            <person name="Sugano S."/>
        </authorList>
    </citation>
    <scope>NUCLEOTIDE SEQUENCE [LARGE SCALE MRNA] (ISOFORMS 1 AND 2)</scope>
    <source>
        <tissue>Testis</tissue>
        <tissue>Uterus</tissue>
    </source>
</reference>
<reference key="2">
    <citation type="journal article" date="2004" name="Nature">
        <title>The DNA sequence and biology of human chromosome 19.</title>
        <authorList>
            <person name="Grimwood J."/>
            <person name="Gordon L.A."/>
            <person name="Olsen A.S."/>
            <person name="Terry A."/>
            <person name="Schmutz J."/>
            <person name="Lamerdin J.E."/>
            <person name="Hellsten U."/>
            <person name="Goodstein D."/>
            <person name="Couronne O."/>
            <person name="Tran-Gyamfi M."/>
            <person name="Aerts A."/>
            <person name="Altherr M."/>
            <person name="Ashworth L."/>
            <person name="Bajorek E."/>
            <person name="Black S."/>
            <person name="Branscomb E."/>
            <person name="Caenepeel S."/>
            <person name="Carrano A.V."/>
            <person name="Caoile C."/>
            <person name="Chan Y.M."/>
            <person name="Christensen M."/>
            <person name="Cleland C.A."/>
            <person name="Copeland A."/>
            <person name="Dalin E."/>
            <person name="Dehal P."/>
            <person name="Denys M."/>
            <person name="Detter J.C."/>
            <person name="Escobar J."/>
            <person name="Flowers D."/>
            <person name="Fotopulos D."/>
            <person name="Garcia C."/>
            <person name="Georgescu A.M."/>
            <person name="Glavina T."/>
            <person name="Gomez M."/>
            <person name="Gonzales E."/>
            <person name="Groza M."/>
            <person name="Hammon N."/>
            <person name="Hawkins T."/>
            <person name="Haydu L."/>
            <person name="Ho I."/>
            <person name="Huang W."/>
            <person name="Israni S."/>
            <person name="Jett J."/>
            <person name="Kadner K."/>
            <person name="Kimball H."/>
            <person name="Kobayashi A."/>
            <person name="Larionov V."/>
            <person name="Leem S.-H."/>
            <person name="Lopez F."/>
            <person name="Lou Y."/>
            <person name="Lowry S."/>
            <person name="Malfatti S."/>
            <person name="Martinez D."/>
            <person name="McCready P.M."/>
            <person name="Medina C."/>
            <person name="Morgan J."/>
            <person name="Nelson K."/>
            <person name="Nolan M."/>
            <person name="Ovcharenko I."/>
            <person name="Pitluck S."/>
            <person name="Pollard M."/>
            <person name="Popkie A.P."/>
            <person name="Predki P."/>
            <person name="Quan G."/>
            <person name="Ramirez L."/>
            <person name="Rash S."/>
            <person name="Retterer J."/>
            <person name="Rodriguez A."/>
            <person name="Rogers S."/>
            <person name="Salamov A."/>
            <person name="Salazar A."/>
            <person name="She X."/>
            <person name="Smith D."/>
            <person name="Slezak T."/>
            <person name="Solovyev V."/>
            <person name="Thayer N."/>
            <person name="Tice H."/>
            <person name="Tsai M."/>
            <person name="Ustaszewska A."/>
            <person name="Vo N."/>
            <person name="Wagner M."/>
            <person name="Wheeler J."/>
            <person name="Wu K."/>
            <person name="Xie G."/>
            <person name="Yang J."/>
            <person name="Dubchak I."/>
            <person name="Furey T.S."/>
            <person name="DeJong P."/>
            <person name="Dickson M."/>
            <person name="Gordon D."/>
            <person name="Eichler E.E."/>
            <person name="Pennacchio L.A."/>
            <person name="Richardson P."/>
            <person name="Stubbs L."/>
            <person name="Rokhsar D.S."/>
            <person name="Myers R.M."/>
            <person name="Rubin E.M."/>
            <person name="Lucas S.M."/>
        </authorList>
    </citation>
    <scope>NUCLEOTIDE SEQUENCE [LARGE SCALE GENOMIC DNA]</scope>
</reference>
<reference key="3">
    <citation type="journal article" date="2004" name="Genome Res.">
        <title>The status, quality, and expansion of the NIH full-length cDNA project: the Mammalian Gene Collection (MGC).</title>
        <authorList>
            <consortium name="The MGC Project Team"/>
        </authorList>
    </citation>
    <scope>NUCLEOTIDE SEQUENCE [LARGE SCALE MRNA] OF 1-366 (ISOFORM 2)</scope>
    <source>
        <tissue>Brain</tissue>
    </source>
</reference>
<reference key="4">
    <citation type="journal article" date="2012" name="Matrix Biol.">
        <title>A disintegrin-like and metalloprotease domain containing thrombospondin type 1 motif-like 5 (ADAMTSL5) is a novel fibrillin-1-, fibrillin-2-, and heparin-binding member of the ADAMTS superfamily containing a netrin-like module.</title>
        <authorList>
            <person name="Bader H.L."/>
            <person name="Wang L.W."/>
            <person name="Ho J.C."/>
            <person name="Tran T."/>
            <person name="Holden P."/>
            <person name="Fitzgerald J."/>
            <person name="Atit R.P."/>
            <person name="Reinhardt D.P."/>
            <person name="Apte S.S."/>
        </authorList>
    </citation>
    <scope>ALTERNATIVE SPLICING</scope>
    <scope>SUBCELLULAR LOCATION</scope>
    <scope>HEPARIN-BINDING</scope>
    <scope>INTERACTION WITH FBN1 AND FBN2</scope>
    <scope>GLYCOSYLATION AT ASN-218</scope>
</reference>
<organism>
    <name type="scientific">Homo sapiens</name>
    <name type="common">Human</name>
    <dbReference type="NCBI Taxonomy" id="9606"/>
    <lineage>
        <taxon>Eukaryota</taxon>
        <taxon>Metazoa</taxon>
        <taxon>Chordata</taxon>
        <taxon>Craniata</taxon>
        <taxon>Vertebrata</taxon>
        <taxon>Euteleostomi</taxon>
        <taxon>Mammalia</taxon>
        <taxon>Eutheria</taxon>
        <taxon>Euarchontoglires</taxon>
        <taxon>Primates</taxon>
        <taxon>Haplorrhini</taxon>
        <taxon>Catarrhini</taxon>
        <taxon>Hominidae</taxon>
        <taxon>Homo</taxon>
    </lineage>
</organism>
<proteinExistence type="evidence at protein level"/>
<protein>
    <recommendedName>
        <fullName>ADAMTS-like protein 5</fullName>
        <shortName>ADAMTSL-5</shortName>
    </recommendedName>
    <alternativeName>
        <fullName>Thrombospondin type-1 domain-containing protein 6</fullName>
    </alternativeName>
</protein>
<dbReference type="EMBL" id="AK131571">
    <property type="protein sequence ID" value="BAD18703.1"/>
    <property type="molecule type" value="mRNA"/>
</dbReference>
<dbReference type="EMBL" id="AK302020">
    <property type="protein sequence ID" value="BAG63419.1"/>
    <property type="molecule type" value="mRNA"/>
</dbReference>
<dbReference type="EMBL" id="AC027307">
    <property type="status" value="NOT_ANNOTATED_CDS"/>
    <property type="molecule type" value="Genomic_DNA"/>
</dbReference>
<dbReference type="EMBL" id="BC040620">
    <property type="protein sequence ID" value="AAH40620.1"/>
    <property type="molecule type" value="mRNA"/>
</dbReference>
<dbReference type="RefSeq" id="NP_001354126.1">
    <molecule id="Q6ZMM2-1"/>
    <property type="nucleotide sequence ID" value="NM_001367197.1"/>
</dbReference>
<dbReference type="RefSeq" id="NP_998769.2">
    <property type="nucleotide sequence ID" value="NM_213604.2"/>
</dbReference>
<dbReference type="RefSeq" id="XP_005259606.1">
    <property type="nucleotide sequence ID" value="XM_005259549.3"/>
</dbReference>
<dbReference type="SMR" id="Q6ZMM2"/>
<dbReference type="BioGRID" id="130874">
    <property type="interactions" value="9"/>
</dbReference>
<dbReference type="FunCoup" id="Q6ZMM2">
    <property type="interactions" value="60"/>
</dbReference>
<dbReference type="IntAct" id="Q6ZMM2">
    <property type="interactions" value="7"/>
</dbReference>
<dbReference type="STRING" id="9606.ENSP00000327608"/>
<dbReference type="GlyCosmos" id="Q6ZMM2">
    <property type="glycosylation" value="2 sites, 1 glycan"/>
</dbReference>
<dbReference type="GlyGen" id="Q6ZMM2">
    <property type="glycosylation" value="3 sites, 2 O-linked glycans (1 site)"/>
</dbReference>
<dbReference type="iPTMnet" id="Q6ZMM2"/>
<dbReference type="BioMuta" id="ADAMTSL5"/>
<dbReference type="DMDM" id="557952602"/>
<dbReference type="jPOST" id="Q6ZMM2"/>
<dbReference type="MassIVE" id="Q6ZMM2"/>
<dbReference type="PaxDb" id="9606-ENSP00000327608"/>
<dbReference type="ProteomicsDB" id="5446"/>
<dbReference type="ProteomicsDB" id="67891">
    <molecule id="Q6ZMM2-1"/>
</dbReference>
<dbReference type="TopDownProteomics" id="Q6ZMM2-2">
    <molecule id="Q6ZMM2-2"/>
</dbReference>
<dbReference type="DNASU" id="339366"/>
<dbReference type="GeneID" id="339366"/>
<dbReference type="KEGG" id="hsa:339366"/>
<dbReference type="AGR" id="HGNC:27912"/>
<dbReference type="CTD" id="339366"/>
<dbReference type="DisGeNET" id="339366"/>
<dbReference type="GeneCards" id="ADAMTSL5"/>
<dbReference type="HGNC" id="HGNC:27912">
    <property type="gene designation" value="ADAMTSL5"/>
</dbReference>
<dbReference type="neXtProt" id="NX_Q6ZMM2"/>
<dbReference type="PharmGKB" id="PA134867057"/>
<dbReference type="eggNOG" id="KOG3538">
    <property type="taxonomic scope" value="Eukaryota"/>
</dbReference>
<dbReference type="InParanoid" id="Q6ZMM2"/>
<dbReference type="OrthoDB" id="5984913at2759"/>
<dbReference type="PAN-GO" id="Q6ZMM2">
    <property type="GO annotations" value="0 GO annotations based on evolutionary models"/>
</dbReference>
<dbReference type="PhylomeDB" id="Q6ZMM2"/>
<dbReference type="TreeFam" id="TF351486"/>
<dbReference type="PathwayCommons" id="Q6ZMM2"/>
<dbReference type="Reactome" id="R-HSA-5083635">
    <property type="pathway name" value="Defective B3GALTL causes PpS"/>
</dbReference>
<dbReference type="Reactome" id="R-HSA-5173214">
    <property type="pathway name" value="O-glycosylation of TSR domain-containing proteins"/>
</dbReference>
<dbReference type="SignaLink" id="Q6ZMM2"/>
<dbReference type="BioGRID-ORCS" id="339366">
    <property type="hits" value="21 hits in 1147 CRISPR screens"/>
</dbReference>
<dbReference type="GenomeRNAi" id="339366"/>
<dbReference type="Pharos" id="Q6ZMM2">
    <property type="development level" value="Tbio"/>
</dbReference>
<dbReference type="PRO" id="PR:Q6ZMM2"/>
<dbReference type="Proteomes" id="UP000005640">
    <property type="component" value="Unplaced"/>
</dbReference>
<dbReference type="RNAct" id="Q6ZMM2">
    <property type="molecule type" value="protein"/>
</dbReference>
<dbReference type="GO" id="GO:0031012">
    <property type="term" value="C:extracellular matrix"/>
    <property type="evidence" value="ECO:0000314"/>
    <property type="project" value="UniProtKB"/>
</dbReference>
<dbReference type="GO" id="GO:0005576">
    <property type="term" value="C:extracellular region"/>
    <property type="evidence" value="ECO:0000314"/>
    <property type="project" value="MGI"/>
</dbReference>
<dbReference type="GO" id="GO:0001527">
    <property type="term" value="C:microfibril"/>
    <property type="evidence" value="ECO:0000314"/>
    <property type="project" value="UniProtKB"/>
</dbReference>
<dbReference type="GO" id="GO:0008201">
    <property type="term" value="F:heparin binding"/>
    <property type="evidence" value="ECO:0000314"/>
    <property type="project" value="UniProtKB"/>
</dbReference>
<dbReference type="GO" id="GO:0050436">
    <property type="term" value="F:microfibril binding"/>
    <property type="evidence" value="ECO:0000314"/>
    <property type="project" value="MGI"/>
</dbReference>
<dbReference type="GO" id="GO:0030198">
    <property type="term" value="P:extracellular matrix organization"/>
    <property type="evidence" value="ECO:0007669"/>
    <property type="project" value="InterPro"/>
</dbReference>
<dbReference type="CDD" id="cd03523">
    <property type="entry name" value="NTR_like"/>
    <property type="match status" value="1"/>
</dbReference>
<dbReference type="FunFam" id="2.60.120.830:FF:000001">
    <property type="entry name" value="A disintegrin and metalloproteinase with thrombospondin motifs 1"/>
    <property type="match status" value="1"/>
</dbReference>
<dbReference type="FunFam" id="2.20.100.10:FF:000097">
    <property type="entry name" value="ADAMTS like 5"/>
    <property type="match status" value="1"/>
</dbReference>
<dbReference type="FunFam" id="2.40.50.120:FF:000021">
    <property type="entry name" value="ADAMTS like 5"/>
    <property type="match status" value="1"/>
</dbReference>
<dbReference type="Gene3D" id="2.40.50.120">
    <property type="match status" value="1"/>
</dbReference>
<dbReference type="Gene3D" id="2.60.120.830">
    <property type="match status" value="1"/>
</dbReference>
<dbReference type="Gene3D" id="2.20.100.10">
    <property type="entry name" value="Thrombospondin type-1 (TSP1) repeat"/>
    <property type="match status" value="1"/>
</dbReference>
<dbReference type="InterPro" id="IPR013273">
    <property type="entry name" value="ADAMTS/ADAMTS-like"/>
</dbReference>
<dbReference type="InterPro" id="IPR050439">
    <property type="entry name" value="ADAMTS_ADAMTS-like"/>
</dbReference>
<dbReference type="InterPro" id="IPR045371">
    <property type="entry name" value="ADAMTS_CR_3"/>
</dbReference>
<dbReference type="InterPro" id="IPR010294">
    <property type="entry name" value="ADAMTS_spacer1"/>
</dbReference>
<dbReference type="InterPro" id="IPR001134">
    <property type="entry name" value="Netrin_domain"/>
</dbReference>
<dbReference type="InterPro" id="IPR018933">
    <property type="entry name" value="Netrin_module_non-TIMP"/>
</dbReference>
<dbReference type="InterPro" id="IPR008993">
    <property type="entry name" value="TIMP-like_OB-fold"/>
</dbReference>
<dbReference type="InterPro" id="IPR000884">
    <property type="entry name" value="TSP1_rpt"/>
</dbReference>
<dbReference type="InterPro" id="IPR036383">
    <property type="entry name" value="TSP1_rpt_sf"/>
</dbReference>
<dbReference type="PANTHER" id="PTHR13723">
    <property type="entry name" value="ADAMTS A DISINTEGRIN AND METALLOPROTEASE WITH THROMBOSPONDIN MOTIFS PROTEASE"/>
    <property type="match status" value="1"/>
</dbReference>
<dbReference type="PANTHER" id="PTHR13723:SF173">
    <property type="entry name" value="ADAMTS-LIKE PROTEIN 5"/>
    <property type="match status" value="1"/>
</dbReference>
<dbReference type="Pfam" id="PF19236">
    <property type="entry name" value="ADAMTS_CR_3"/>
    <property type="match status" value="1"/>
</dbReference>
<dbReference type="Pfam" id="PF05986">
    <property type="entry name" value="ADAMTS_spacer1"/>
    <property type="match status" value="1"/>
</dbReference>
<dbReference type="Pfam" id="PF01759">
    <property type="entry name" value="NTR"/>
    <property type="match status" value="1"/>
</dbReference>
<dbReference type="Pfam" id="PF00090">
    <property type="entry name" value="TSP_1"/>
    <property type="match status" value="1"/>
</dbReference>
<dbReference type="PRINTS" id="PR01857">
    <property type="entry name" value="ADAMTSFAMILY"/>
</dbReference>
<dbReference type="SMART" id="SM00643">
    <property type="entry name" value="C345C"/>
    <property type="match status" value="1"/>
</dbReference>
<dbReference type="SMART" id="SM00209">
    <property type="entry name" value="TSP1"/>
    <property type="match status" value="1"/>
</dbReference>
<dbReference type="SUPFAM" id="SSF50242">
    <property type="entry name" value="TIMP-like"/>
    <property type="match status" value="1"/>
</dbReference>
<dbReference type="SUPFAM" id="SSF82895">
    <property type="entry name" value="TSP-1 type 1 repeat"/>
    <property type="match status" value="1"/>
</dbReference>
<dbReference type="PROSITE" id="PS50189">
    <property type="entry name" value="NTR"/>
    <property type="match status" value="1"/>
</dbReference>
<dbReference type="PROSITE" id="PS50092">
    <property type="entry name" value="TSP1"/>
    <property type="match status" value="1"/>
</dbReference>
<evidence type="ECO:0000250" key="1"/>
<evidence type="ECO:0000255" key="2"/>
<evidence type="ECO:0000255" key="3">
    <source>
        <dbReference type="PROSITE-ProRule" id="PRU00210"/>
    </source>
</evidence>
<evidence type="ECO:0000255" key="4">
    <source>
        <dbReference type="PROSITE-ProRule" id="PRU00295"/>
    </source>
</evidence>
<evidence type="ECO:0000256" key="5">
    <source>
        <dbReference type="SAM" id="MobiDB-lite"/>
    </source>
</evidence>
<evidence type="ECO:0000269" key="6">
    <source>
    </source>
</evidence>
<evidence type="ECO:0000303" key="7">
    <source>
    </source>
</evidence>
<evidence type="ECO:0000303" key="8">
    <source>
    </source>
</evidence>
<evidence type="ECO:0000305" key="9"/>
<keyword id="KW-0025">Alternative splicing</keyword>
<keyword id="KW-1015">Disulfide bond</keyword>
<keyword id="KW-0272">Extracellular matrix</keyword>
<keyword id="KW-0325">Glycoprotein</keyword>
<keyword id="KW-0358">Heparin-binding</keyword>
<keyword id="KW-1267">Proteomics identification</keyword>
<keyword id="KW-1185">Reference proteome</keyword>
<keyword id="KW-0964">Secreted</keyword>
<keyword id="KW-0732">Signal</keyword>
<feature type="signal peptide" evidence="2">
    <location>
        <begin position="1"/>
        <end position="42"/>
    </location>
</feature>
<feature type="chain" id="PRO_0000249582" description="ADAMTS-like protein 5">
    <location>
        <begin position="43"/>
        <end position="481"/>
    </location>
</feature>
<feature type="domain" description="TSP type-1" evidence="3">
    <location>
        <begin position="45"/>
        <end position="97"/>
    </location>
</feature>
<feature type="domain" description="NTR" evidence="4">
    <location>
        <begin position="360"/>
        <end position="479"/>
    </location>
</feature>
<feature type="region of interest" description="Disordered" evidence="5">
    <location>
        <begin position="331"/>
        <end position="361"/>
    </location>
</feature>
<feature type="compositionally biased region" description="Low complexity" evidence="5">
    <location>
        <begin position="345"/>
        <end position="355"/>
    </location>
</feature>
<feature type="glycosylation site" description="N-linked (GlcNAc...) asparagine" evidence="6">
    <location>
        <position position="218"/>
    </location>
</feature>
<feature type="disulfide bond" evidence="1">
    <location>
        <begin position="57"/>
        <end position="91"/>
    </location>
</feature>
<feature type="disulfide bond" evidence="1">
    <location>
        <begin position="61"/>
        <end position="96"/>
    </location>
</feature>
<feature type="disulfide bond" evidence="1">
    <location>
        <begin position="72"/>
        <end position="81"/>
    </location>
</feature>
<feature type="disulfide bond" evidence="1">
    <location>
        <begin position="360"/>
        <end position="425"/>
    </location>
</feature>
<feature type="disulfide bond" evidence="1">
    <location>
        <begin position="363"/>
        <end position="427"/>
    </location>
</feature>
<feature type="disulfide bond" evidence="1">
    <location>
        <begin position="377"/>
        <end position="479"/>
    </location>
</feature>
<feature type="splice variant" id="VSP_053358" description="In isoform 2." evidence="7 8">
    <original>WLASGHTE</original>
    <variation>MDSAPLFP</variation>
    <location>
        <begin position="11"/>
        <end position="18"/>
    </location>
</feature>
<feature type="sequence conflict" description="In Ref. 1; BAD18703." evidence="9" ref="1">
    <original>N</original>
    <variation>D</variation>
    <location>
        <position position="197"/>
    </location>
</feature>
<comment type="function">
    <text>May play a role in modulation of fibrillin microfibrils in the extracellular matrix (ECM).</text>
</comment>
<comment type="subunit">
    <text evidence="6">Interacts with heparin, FBN1 and FBN2.</text>
</comment>
<comment type="interaction">
    <interactant intactId="EBI-9075891">
        <id>Q6ZMM2</id>
    </interactant>
    <interactant intactId="EBI-3867333">
        <id>A8MQ03</id>
        <label>CYSRT1</label>
    </interactant>
    <organismsDiffer>false</organismsDiffer>
    <experiments>3</experiments>
</comment>
<comment type="interaction">
    <interactant intactId="EBI-9075891">
        <id>Q6ZMM2</id>
    </interactant>
    <interactant intactId="EBI-750641">
        <id>Q5TD97</id>
        <label>FHL5</label>
    </interactant>
    <organismsDiffer>false</organismsDiffer>
    <experiments>3</experiments>
</comment>
<comment type="interaction">
    <interactant intactId="EBI-9075891">
        <id>Q6ZMM2</id>
    </interactant>
    <interactant intactId="EBI-3958099">
        <id>P26371</id>
        <label>KRTAP5-9</label>
    </interactant>
    <organismsDiffer>false</organismsDiffer>
    <experiments>3</experiments>
</comment>
<comment type="interaction">
    <interactant intactId="EBI-10254938">
        <id>Q6ZMM2-2</id>
    </interactant>
    <interactant intactId="EBI-10173507">
        <id>Q6UY14-3</id>
        <label>ADAMTSL4</label>
    </interactant>
    <organismsDiffer>false</organismsDiffer>
    <experiments>3</experiments>
</comment>
<comment type="interaction">
    <interactant intactId="EBI-10254938">
        <id>Q6ZMM2-2</id>
    </interactant>
    <interactant intactId="EBI-945833">
        <id>Q7Z3S9</id>
        <label>NOTCH2NLA</label>
    </interactant>
    <organismsDiffer>false</organismsDiffer>
    <experiments>3</experiments>
</comment>
<comment type="subcellular location">
    <subcellularLocation>
        <location evidence="6">Secreted</location>
    </subcellularLocation>
    <subcellularLocation>
        <location evidence="6">Secreted</location>
        <location evidence="6">Extracellular space</location>
        <location evidence="6">Extracellular matrix</location>
    </subcellularLocation>
    <text>Colocalized with fibrillin microfibrils. Predominantly distributed in baso-lateral regions of fibroblast extracellular matrix.</text>
</comment>
<comment type="alternative products">
    <event type="alternative splicing"/>
    <isoform>
        <id>Q6ZMM2-1</id>
        <name>1</name>
        <sequence type="displayed"/>
    </isoform>
    <isoform>
        <id>Q6ZMM2-2</id>
        <name>2</name>
        <sequence type="described" ref="VSP_053358"/>
    </isoform>
</comment>
<comment type="PTM">
    <text>Proteolytically cleaved to release a C-terminal fragment containing the NTR domain.</text>
</comment>
<comment type="PTM">
    <text evidence="6">Contains at least one additional N-linked glycosylation site.</text>
</comment>
<comment type="miscellaneous">
    <molecule>Isoform 1</molecule>
    <text>Major.</text>
</comment>
<comment type="miscellaneous">
    <molecule>Isoform 2</molecule>
    <text evidence="9">Minor.</text>
</comment>
<comment type="caution">
    <text evidence="9">Although strongly similar to members of the ADAMTS family it lacks the metalloprotease and disintegrin-like domains which are typical of that family.</text>
</comment>
<name>ATL5_HUMAN</name>
<gene>
    <name type="primary">ADAMTSL5</name>
    <name type="synonym">THSD6</name>
</gene>
<accession>Q6ZMM2</accession>
<accession>B4DXK7</accession>
<accession>Q8IW95</accession>
<sequence length="481" mass="53193">MGKLRPGRVEWLASGHTERPHLFQNLLLFLWALLNCGLGVSAQGPGEWTPWVSWTRCSSSCGRGVSVRSRRCLRLPGEEPCWGDSHEYRLCQLPDCPPGAVPFRDLQCALYNGRPVLGTQKTYQWVPFHGAPNQCDLNCLAEGHAFYHSFGRVLDGTACSPGAQGVCVAGRCLSAGCDGLLGSGALEDRCGRCGGANDSCLFVQRVFRDAGAFAGYWNVTLIPEGARHIRVEHRSRNHLALMGGDGRYVLNGHWVVSPPGTYEAAGTHVVYTRDTGPQETLQAAGPTSHDLLLQVLLQEPNPGIEFEFWLPRERYSPFQARVQALGWPLRQPQPRGVEPQPPAAPAVTPAQTPTLAPDPCPPCPDTRGRAHRLLHYCGSDFVFQARVLGHHHQAQETRYEVRIQLVYKNRSPLRAREYVWAPGHCPCPMLAPHRDYLMAVQRLVSPDGTQDQLLLPHAGYARPWSPAEDSRIRLTARRCPG</sequence>